<accession>Q4WZF1</accession>
<accession>Q876N2</accession>
<protein>
    <recommendedName>
        <fullName>Sorting nexin mvp1</fullName>
    </recommendedName>
</protein>
<name>MVP1_ASPFU</name>
<organism>
    <name type="scientific">Aspergillus fumigatus (strain ATCC MYA-4609 / CBS 101355 / FGSC A1100 / Af293)</name>
    <name type="common">Neosartorya fumigata</name>
    <dbReference type="NCBI Taxonomy" id="330879"/>
    <lineage>
        <taxon>Eukaryota</taxon>
        <taxon>Fungi</taxon>
        <taxon>Dikarya</taxon>
        <taxon>Ascomycota</taxon>
        <taxon>Pezizomycotina</taxon>
        <taxon>Eurotiomycetes</taxon>
        <taxon>Eurotiomycetidae</taxon>
        <taxon>Eurotiales</taxon>
        <taxon>Aspergillaceae</taxon>
        <taxon>Aspergillus</taxon>
        <taxon>Aspergillus subgen. Fumigati</taxon>
    </lineage>
</organism>
<feature type="chain" id="PRO_0000238594" description="Sorting nexin mvp1">
    <location>
        <begin position="1"/>
        <end position="729"/>
    </location>
</feature>
<feature type="domain" description="PX" evidence="2">
    <location>
        <begin position="356"/>
        <end position="464"/>
    </location>
</feature>
<feature type="region of interest" description="Disordered" evidence="3">
    <location>
        <begin position="1"/>
        <end position="43"/>
    </location>
</feature>
<feature type="region of interest" description="Disordered" evidence="3">
    <location>
        <begin position="177"/>
        <end position="340"/>
    </location>
</feature>
<feature type="binding site" evidence="1">
    <location>
        <position position="392"/>
    </location>
    <ligand>
        <name>a 1,2-diacyl-sn-glycero-3-phospho-(1D-myo-inositol-3-phosphate)</name>
        <dbReference type="ChEBI" id="CHEBI:58088"/>
    </ligand>
</feature>
<feature type="binding site" evidence="1">
    <location>
        <position position="394"/>
    </location>
    <ligand>
        <name>a 1,2-diacyl-sn-glycero-3-phospho-(1D-myo-inositol-3-phosphate)</name>
        <dbReference type="ChEBI" id="CHEBI:58088"/>
    </ligand>
</feature>
<feature type="binding site" evidence="1">
    <location>
        <position position="418"/>
    </location>
    <ligand>
        <name>a 1,2-diacyl-sn-glycero-3-phospho-(1D-myo-inositol-3-phosphate)</name>
        <dbReference type="ChEBI" id="CHEBI:58088"/>
    </ligand>
</feature>
<feature type="binding site" evidence="1">
    <location>
        <position position="431"/>
    </location>
    <ligand>
        <name>a 1,2-diacyl-sn-glycero-3-phospho-(1D-myo-inositol-3-phosphate)</name>
        <dbReference type="ChEBI" id="CHEBI:58088"/>
    </ligand>
</feature>
<feature type="sequence conflict" description="In Ref. 1; AAM08674." evidence="4" ref="1">
    <original>E</original>
    <variation>K</variation>
    <location>
        <position position="162"/>
    </location>
</feature>
<dbReference type="EMBL" id="AY080962">
    <property type="protein sequence ID" value="AAM08674.1"/>
    <property type="molecule type" value="Genomic_DNA"/>
</dbReference>
<dbReference type="EMBL" id="AAHF01000001">
    <property type="protein sequence ID" value="EAL94014.1"/>
    <property type="molecule type" value="Genomic_DNA"/>
</dbReference>
<dbReference type="RefSeq" id="XP_756052.1">
    <property type="nucleotide sequence ID" value="XM_750959.1"/>
</dbReference>
<dbReference type="SMR" id="Q4WZF1"/>
<dbReference type="FunCoup" id="Q4WZF1">
    <property type="interactions" value="164"/>
</dbReference>
<dbReference type="STRING" id="330879.Q4WZF1"/>
<dbReference type="EnsemblFungi" id="EAL94014">
    <property type="protein sequence ID" value="EAL94014"/>
    <property type="gene ID" value="AFUA_2G17180"/>
</dbReference>
<dbReference type="GeneID" id="3513397"/>
<dbReference type="KEGG" id="afm:AFUA_2G17180"/>
<dbReference type="VEuPathDB" id="FungiDB:Afu2g17180"/>
<dbReference type="eggNOG" id="KOG2273">
    <property type="taxonomic scope" value="Eukaryota"/>
</dbReference>
<dbReference type="HOGENOM" id="CLU_009058_1_0_1"/>
<dbReference type="InParanoid" id="Q4WZF1"/>
<dbReference type="OMA" id="SSPWDMP"/>
<dbReference type="OrthoDB" id="10064318at2759"/>
<dbReference type="Proteomes" id="UP000002530">
    <property type="component" value="Chromosome 2"/>
</dbReference>
<dbReference type="GO" id="GO:0005829">
    <property type="term" value="C:cytosol"/>
    <property type="evidence" value="ECO:0007669"/>
    <property type="project" value="GOC"/>
</dbReference>
<dbReference type="GO" id="GO:0005768">
    <property type="term" value="C:endosome"/>
    <property type="evidence" value="ECO:0000318"/>
    <property type="project" value="GO_Central"/>
</dbReference>
<dbReference type="GO" id="GO:0016020">
    <property type="term" value="C:membrane"/>
    <property type="evidence" value="ECO:0007669"/>
    <property type="project" value="UniProtKB-SubCell"/>
</dbReference>
<dbReference type="GO" id="GO:0032266">
    <property type="term" value="F:phosphatidylinositol-3-phosphate binding"/>
    <property type="evidence" value="ECO:0000318"/>
    <property type="project" value="GO_Central"/>
</dbReference>
<dbReference type="GO" id="GO:0006623">
    <property type="term" value="P:protein targeting to vacuole"/>
    <property type="evidence" value="ECO:0000318"/>
    <property type="project" value="GO_Central"/>
</dbReference>
<dbReference type="GO" id="GO:0042147">
    <property type="term" value="P:retrograde transport, endosome to Golgi"/>
    <property type="evidence" value="ECO:0000318"/>
    <property type="project" value="GO_Central"/>
</dbReference>
<dbReference type="CDD" id="cd07597">
    <property type="entry name" value="BAR_SNX8"/>
    <property type="match status" value="1"/>
</dbReference>
<dbReference type="CDD" id="cd06866">
    <property type="entry name" value="PX_SNX8_Mvp1p_like"/>
    <property type="match status" value="1"/>
</dbReference>
<dbReference type="FunFam" id="3.30.1520.10:FF:000037">
    <property type="entry name" value="Sorting nexin mvp-1"/>
    <property type="match status" value="1"/>
</dbReference>
<dbReference type="FunFam" id="1.20.1270.60:FF:000072">
    <property type="entry name" value="Sorting nexin MVP1"/>
    <property type="match status" value="1"/>
</dbReference>
<dbReference type="FunFam" id="1.10.238.10:FF:000466">
    <property type="entry name" value="Sorting nexin Mvp1"/>
    <property type="match status" value="1"/>
</dbReference>
<dbReference type="Gene3D" id="1.20.1270.60">
    <property type="entry name" value="Arfaptin homology (AH) domain/BAR domain"/>
    <property type="match status" value="1"/>
</dbReference>
<dbReference type="Gene3D" id="1.10.238.10">
    <property type="entry name" value="EF-hand"/>
    <property type="match status" value="1"/>
</dbReference>
<dbReference type="Gene3D" id="3.30.1520.10">
    <property type="entry name" value="Phox-like domain"/>
    <property type="match status" value="1"/>
</dbReference>
<dbReference type="InterPro" id="IPR027267">
    <property type="entry name" value="AH/BAR_dom_sf"/>
</dbReference>
<dbReference type="InterPro" id="IPR001683">
    <property type="entry name" value="PX_dom"/>
</dbReference>
<dbReference type="InterPro" id="IPR036871">
    <property type="entry name" value="PX_dom_sf"/>
</dbReference>
<dbReference type="InterPro" id="IPR028662">
    <property type="entry name" value="SNX8/Mvp1"/>
</dbReference>
<dbReference type="InterPro" id="IPR035704">
    <property type="entry name" value="SNX8/Mvp1_PX"/>
</dbReference>
<dbReference type="InterPro" id="IPR045734">
    <property type="entry name" value="Snx8_BAR_dom"/>
</dbReference>
<dbReference type="PANTHER" id="PTHR47554">
    <property type="entry name" value="SORTING NEXIN MVP1"/>
    <property type="match status" value="1"/>
</dbReference>
<dbReference type="PANTHER" id="PTHR47554:SF1">
    <property type="entry name" value="SORTING NEXIN MVP1"/>
    <property type="match status" value="1"/>
</dbReference>
<dbReference type="Pfam" id="PF00787">
    <property type="entry name" value="PX"/>
    <property type="match status" value="1"/>
</dbReference>
<dbReference type="Pfam" id="PF19566">
    <property type="entry name" value="Snx8_BAR_dom"/>
    <property type="match status" value="1"/>
</dbReference>
<dbReference type="SMART" id="SM00312">
    <property type="entry name" value="PX"/>
    <property type="match status" value="1"/>
</dbReference>
<dbReference type="SUPFAM" id="SSF64268">
    <property type="entry name" value="PX domain"/>
    <property type="match status" value="1"/>
</dbReference>
<dbReference type="PROSITE" id="PS50195">
    <property type="entry name" value="PX"/>
    <property type="match status" value="1"/>
</dbReference>
<sequence>MSLFGTSPDDPSMGDSVHQRSRSSLFADEPLPGGAGAGNSANLGSSSLFADDDGFQSSSPWNSNANKRAARHELVKTLLPDADVPESYIDAYDLVLNEGDRVGGVVGLTSVREILSSSGLSASDQAKIFNLVVSGDGDSANGLGRGQFNVLLALIGLAQEGEDLTFDAVDDRRKKLPLPKSSYLDRLRDRQQPSAPSHPEERPTTPPPPPAAINDPPSARSRQSRETLGGLDADPWGSPQLHRGHNHVQTEPEPPVLNGFGSVRSATNAWSSGAGEDETQHEVPSGLRANGRTDGAPSTSSGSGWGGSYRNTTAGDGFGGPIRAGLGNLGAPSSGQEEPNARRRLGIGISTSSQVEETVTVNLLPEKEGMFMFQHRNYEVKSSRRGSTVIRRYSDFVWLLDCLQKRYPFRQLPLLPPKRIAADSNSFLEKRRRGLVRFTNALVRHPVLSQEQLVVMFLTVPTELSVWRKQATISVQDEFTGRVLPPDLEDSLPANLTDIFETVRSGVKRSAEIYINLCTLLERLAKRNEGLAADHLRFSLALQSLTEVTKDTYAVDTNDVPILNEGIMATARHLSNSQSLLEDEARAWENGILEDLKFQRDCLVSVREMFDRRDRYARNNIPQLERRIESNERKLEELRTRPQGAVKPGEIEKVEESIFKDKESIVQQHARGVFIKECIRDELVHFQRSQYHISRLHQDWSQERVKYSELQADNWRSLSDQVEGMPLGE</sequence>
<gene>
    <name type="primary">mvp1</name>
    <name type="ORF">25d9-1</name>
    <name type="ORF">AFUA_2G17180</name>
</gene>
<comment type="function">
    <text evidence="1">Required for vacuolar protein sorting.</text>
</comment>
<comment type="subcellular location">
    <subcellularLocation>
        <location evidence="1">Cytoplasm</location>
    </subcellularLocation>
    <subcellularLocation>
        <location evidence="1">Membrane</location>
        <topology evidence="1">Peripheral membrane protein</topology>
        <orientation evidence="1">Cytoplasmic side</orientation>
    </subcellularLocation>
</comment>
<comment type="domain">
    <text evidence="1">The PX domain binds phosphatidylinositol 3-phosphate which is necessary for peripheral membrane localization.</text>
</comment>
<comment type="similarity">
    <text evidence="4">Belongs to the sorting nexin family.</text>
</comment>
<keyword id="KW-0963">Cytoplasm</keyword>
<keyword id="KW-0472">Membrane</keyword>
<keyword id="KW-0653">Protein transport</keyword>
<keyword id="KW-1185">Reference proteome</keyword>
<keyword id="KW-0813">Transport</keyword>
<proteinExistence type="inferred from homology"/>
<reference key="1">
    <citation type="journal article" date="2002" name="Genetics">
        <title>Characterization of essential genes by parasexual genetics in the human fungal pathogen Aspergillus fumigatus: impact of genomic rearrangements associated with electroporation of DNA.</title>
        <authorList>
            <person name="Firon A."/>
            <person name="Beauvais A."/>
            <person name="Latge J.-P."/>
            <person name="Couve E."/>
            <person name="Grosjean-Cournoyer M.-C."/>
            <person name="D'Enfert C."/>
        </authorList>
    </citation>
    <scope>NUCLEOTIDE SEQUENCE [GENOMIC DNA]</scope>
</reference>
<reference key="2">
    <citation type="journal article" date="2005" name="Nature">
        <title>Genomic sequence of the pathogenic and allergenic filamentous fungus Aspergillus fumigatus.</title>
        <authorList>
            <person name="Nierman W.C."/>
            <person name="Pain A."/>
            <person name="Anderson M.J."/>
            <person name="Wortman J.R."/>
            <person name="Kim H.S."/>
            <person name="Arroyo J."/>
            <person name="Berriman M."/>
            <person name="Abe K."/>
            <person name="Archer D.B."/>
            <person name="Bermejo C."/>
            <person name="Bennett J.W."/>
            <person name="Bowyer P."/>
            <person name="Chen D."/>
            <person name="Collins M."/>
            <person name="Coulsen R."/>
            <person name="Davies R."/>
            <person name="Dyer P.S."/>
            <person name="Farman M.L."/>
            <person name="Fedorova N."/>
            <person name="Fedorova N.D."/>
            <person name="Feldblyum T.V."/>
            <person name="Fischer R."/>
            <person name="Fosker N."/>
            <person name="Fraser A."/>
            <person name="Garcia J.L."/>
            <person name="Garcia M.J."/>
            <person name="Goble A."/>
            <person name="Goldman G.H."/>
            <person name="Gomi K."/>
            <person name="Griffith-Jones S."/>
            <person name="Gwilliam R."/>
            <person name="Haas B.J."/>
            <person name="Haas H."/>
            <person name="Harris D.E."/>
            <person name="Horiuchi H."/>
            <person name="Huang J."/>
            <person name="Humphray S."/>
            <person name="Jimenez J."/>
            <person name="Keller N."/>
            <person name="Khouri H."/>
            <person name="Kitamoto K."/>
            <person name="Kobayashi T."/>
            <person name="Konzack S."/>
            <person name="Kulkarni R."/>
            <person name="Kumagai T."/>
            <person name="Lafton A."/>
            <person name="Latge J.-P."/>
            <person name="Li W."/>
            <person name="Lord A."/>
            <person name="Lu C."/>
            <person name="Majoros W.H."/>
            <person name="May G.S."/>
            <person name="Miller B.L."/>
            <person name="Mohamoud Y."/>
            <person name="Molina M."/>
            <person name="Monod M."/>
            <person name="Mouyna I."/>
            <person name="Mulligan S."/>
            <person name="Murphy L.D."/>
            <person name="O'Neil S."/>
            <person name="Paulsen I."/>
            <person name="Penalva M.A."/>
            <person name="Pertea M."/>
            <person name="Price C."/>
            <person name="Pritchard B.L."/>
            <person name="Quail M.A."/>
            <person name="Rabbinowitsch E."/>
            <person name="Rawlins N."/>
            <person name="Rajandream M.A."/>
            <person name="Reichard U."/>
            <person name="Renauld H."/>
            <person name="Robson G.D."/>
            <person name="Rodriguez de Cordoba S."/>
            <person name="Rodriguez-Pena J.M."/>
            <person name="Ronning C.M."/>
            <person name="Rutter S."/>
            <person name="Salzberg S.L."/>
            <person name="Sanchez M."/>
            <person name="Sanchez-Ferrero J.C."/>
            <person name="Saunders D."/>
            <person name="Seeger K."/>
            <person name="Squares R."/>
            <person name="Squares S."/>
            <person name="Takeuchi M."/>
            <person name="Tekaia F."/>
            <person name="Turner G."/>
            <person name="Vazquez de Aldana C.R."/>
            <person name="Weidman J."/>
            <person name="White O."/>
            <person name="Woodward J.R."/>
            <person name="Yu J.-H."/>
            <person name="Fraser C.M."/>
            <person name="Galagan J.E."/>
            <person name="Asai K."/>
            <person name="Machida M."/>
            <person name="Hall N."/>
            <person name="Barrell B.G."/>
            <person name="Denning D.W."/>
        </authorList>
    </citation>
    <scope>NUCLEOTIDE SEQUENCE [LARGE SCALE GENOMIC DNA]</scope>
    <source>
        <strain>ATCC MYA-4609 / CBS 101355 / FGSC A1100 / Af293</strain>
    </source>
</reference>
<evidence type="ECO:0000250" key="1"/>
<evidence type="ECO:0000255" key="2">
    <source>
        <dbReference type="PROSITE-ProRule" id="PRU00147"/>
    </source>
</evidence>
<evidence type="ECO:0000256" key="3">
    <source>
        <dbReference type="SAM" id="MobiDB-lite"/>
    </source>
</evidence>
<evidence type="ECO:0000305" key="4"/>